<accession>P57161</accession>
<sequence>MLEEKKKQESFEIQRIYIKDVSFEAPNTPNIFHVNWIPTIKLNLNTTTKKIKENIFEVVLMVKVTVKIKEDLVFLCDIDQAGIFFIANINEKRLKHCLYSYCPNILFPYARTCISNLVSCGSFPQMNLAPINFDALYHDHIK</sequence>
<reference key="1">
    <citation type="journal article" date="2000" name="Nature">
        <title>Genome sequence of the endocellular bacterial symbiont of aphids Buchnera sp. APS.</title>
        <authorList>
            <person name="Shigenobu S."/>
            <person name="Watanabe H."/>
            <person name="Hattori M."/>
            <person name="Sakaki Y."/>
            <person name="Ishikawa H."/>
        </authorList>
    </citation>
    <scope>NUCLEOTIDE SEQUENCE [LARGE SCALE GENOMIC DNA]</scope>
    <source>
        <strain>APS</strain>
    </source>
</reference>
<dbReference type="EMBL" id="BA000003">
    <property type="protein sequence ID" value="BAB12776.1"/>
    <property type="molecule type" value="Genomic_DNA"/>
</dbReference>
<dbReference type="RefSeq" id="NP_239890.1">
    <property type="nucleotide sequence ID" value="NC_002528.1"/>
</dbReference>
<dbReference type="RefSeq" id="WP_009874010.1">
    <property type="nucleotide sequence ID" value="NZ_AP036055.1"/>
</dbReference>
<dbReference type="SMR" id="P57161"/>
<dbReference type="STRING" id="563178.BUAP5A_052"/>
<dbReference type="EnsemblBacteria" id="BAB12776">
    <property type="protein sequence ID" value="BAB12776"/>
    <property type="gene ID" value="BAB12776"/>
</dbReference>
<dbReference type="KEGG" id="buc:BU053"/>
<dbReference type="PATRIC" id="fig|107806.10.peg.62"/>
<dbReference type="eggNOG" id="COG1952">
    <property type="taxonomic scope" value="Bacteria"/>
</dbReference>
<dbReference type="HOGENOM" id="CLU_111574_1_0_6"/>
<dbReference type="Proteomes" id="UP000001806">
    <property type="component" value="Chromosome"/>
</dbReference>
<dbReference type="GO" id="GO:0005737">
    <property type="term" value="C:cytoplasm"/>
    <property type="evidence" value="ECO:0007669"/>
    <property type="project" value="UniProtKB-SubCell"/>
</dbReference>
<dbReference type="GO" id="GO:0051082">
    <property type="term" value="F:unfolded protein binding"/>
    <property type="evidence" value="ECO:0007669"/>
    <property type="project" value="InterPro"/>
</dbReference>
<dbReference type="GO" id="GO:0006457">
    <property type="term" value="P:protein folding"/>
    <property type="evidence" value="ECO:0007669"/>
    <property type="project" value="UniProtKB-UniRule"/>
</dbReference>
<dbReference type="GO" id="GO:0051262">
    <property type="term" value="P:protein tetramerization"/>
    <property type="evidence" value="ECO:0007669"/>
    <property type="project" value="InterPro"/>
</dbReference>
<dbReference type="GO" id="GO:0015031">
    <property type="term" value="P:protein transport"/>
    <property type="evidence" value="ECO:0007669"/>
    <property type="project" value="UniProtKB-UniRule"/>
</dbReference>
<dbReference type="Gene3D" id="3.10.420.10">
    <property type="entry name" value="SecB-like"/>
    <property type="match status" value="1"/>
</dbReference>
<dbReference type="HAMAP" id="MF_00821">
    <property type="entry name" value="SecB"/>
    <property type="match status" value="1"/>
</dbReference>
<dbReference type="InterPro" id="IPR003708">
    <property type="entry name" value="SecB"/>
</dbReference>
<dbReference type="InterPro" id="IPR035958">
    <property type="entry name" value="SecB-like_sf"/>
</dbReference>
<dbReference type="NCBIfam" id="NF004393">
    <property type="entry name" value="PRK05751.1-4"/>
    <property type="match status" value="1"/>
</dbReference>
<dbReference type="NCBIfam" id="TIGR00809">
    <property type="entry name" value="secB"/>
    <property type="match status" value="1"/>
</dbReference>
<dbReference type="PANTHER" id="PTHR36918">
    <property type="match status" value="1"/>
</dbReference>
<dbReference type="PANTHER" id="PTHR36918:SF1">
    <property type="entry name" value="PROTEIN-EXPORT PROTEIN SECB"/>
    <property type="match status" value="1"/>
</dbReference>
<dbReference type="Pfam" id="PF02556">
    <property type="entry name" value="SecB"/>
    <property type="match status" value="1"/>
</dbReference>
<dbReference type="PRINTS" id="PR01594">
    <property type="entry name" value="SECBCHAPRONE"/>
</dbReference>
<dbReference type="SUPFAM" id="SSF54611">
    <property type="entry name" value="SecB-like"/>
    <property type="match status" value="1"/>
</dbReference>
<feature type="chain" id="PRO_0000055356" description="Protein-export protein SecB">
    <location>
        <begin position="1"/>
        <end position="142"/>
    </location>
</feature>
<evidence type="ECO:0000255" key="1">
    <source>
        <dbReference type="HAMAP-Rule" id="MF_00821"/>
    </source>
</evidence>
<comment type="function">
    <text evidence="1">One of the proteins required for the normal export of preproteins out of the cell cytoplasm. It is a molecular chaperone that binds to a subset of precursor proteins, maintaining them in a translocation-competent state. It also specifically binds to its receptor SecA.</text>
</comment>
<comment type="subunit">
    <text evidence="1">Homotetramer, a dimer of dimers. One homotetramer interacts with 1 SecA dimer.</text>
</comment>
<comment type="subcellular location">
    <subcellularLocation>
        <location evidence="1">Cytoplasm</location>
    </subcellularLocation>
</comment>
<comment type="similarity">
    <text evidence="1">Belongs to the SecB family.</text>
</comment>
<protein>
    <recommendedName>
        <fullName evidence="1">Protein-export protein SecB</fullName>
    </recommendedName>
</protein>
<organism>
    <name type="scientific">Buchnera aphidicola subsp. Acyrthosiphon pisum (strain APS)</name>
    <name type="common">Acyrthosiphon pisum symbiotic bacterium</name>
    <dbReference type="NCBI Taxonomy" id="107806"/>
    <lineage>
        <taxon>Bacteria</taxon>
        <taxon>Pseudomonadati</taxon>
        <taxon>Pseudomonadota</taxon>
        <taxon>Gammaproteobacteria</taxon>
        <taxon>Enterobacterales</taxon>
        <taxon>Erwiniaceae</taxon>
        <taxon>Buchnera</taxon>
    </lineage>
</organism>
<proteinExistence type="inferred from homology"/>
<name>SECB_BUCAI</name>
<keyword id="KW-0143">Chaperone</keyword>
<keyword id="KW-0963">Cytoplasm</keyword>
<keyword id="KW-0653">Protein transport</keyword>
<keyword id="KW-1185">Reference proteome</keyword>
<keyword id="KW-0811">Translocation</keyword>
<keyword id="KW-0813">Transport</keyword>
<gene>
    <name evidence="1" type="primary">secB</name>
    <name type="ordered locus">BU053</name>
</gene>